<proteinExistence type="inferred from homology"/>
<name>RS19_METPP</name>
<reference key="1">
    <citation type="journal article" date="2007" name="J. Bacteriol.">
        <title>Whole-genome analysis of the methyl tert-butyl ether-degrading beta-proteobacterium Methylibium petroleiphilum PM1.</title>
        <authorList>
            <person name="Kane S.R."/>
            <person name="Chakicherla A.Y."/>
            <person name="Chain P.S.G."/>
            <person name="Schmidt R."/>
            <person name="Shin M.W."/>
            <person name="Legler T.C."/>
            <person name="Scow K.M."/>
            <person name="Larimer F.W."/>
            <person name="Lucas S.M."/>
            <person name="Richardson P.M."/>
            <person name="Hristova K.R."/>
        </authorList>
    </citation>
    <scope>NUCLEOTIDE SEQUENCE [LARGE SCALE GENOMIC DNA]</scope>
    <source>
        <strain>ATCC BAA-1232 / LMG 22953 / PM1</strain>
    </source>
</reference>
<feature type="chain" id="PRO_1000051074" description="Small ribosomal subunit protein uS19">
    <location>
        <begin position="1"/>
        <end position="91"/>
    </location>
</feature>
<accession>A2SLF3</accession>
<dbReference type="EMBL" id="CP000555">
    <property type="protein sequence ID" value="ABM96392.1"/>
    <property type="molecule type" value="Genomic_DNA"/>
</dbReference>
<dbReference type="RefSeq" id="WP_011831013.1">
    <property type="nucleotide sequence ID" value="NC_008825.1"/>
</dbReference>
<dbReference type="SMR" id="A2SLF3"/>
<dbReference type="STRING" id="420662.Mpe_A3439"/>
<dbReference type="KEGG" id="mpt:Mpe_A3439"/>
<dbReference type="eggNOG" id="COG0185">
    <property type="taxonomic scope" value="Bacteria"/>
</dbReference>
<dbReference type="HOGENOM" id="CLU_144911_0_1_4"/>
<dbReference type="Proteomes" id="UP000000366">
    <property type="component" value="Chromosome"/>
</dbReference>
<dbReference type="GO" id="GO:0005737">
    <property type="term" value="C:cytoplasm"/>
    <property type="evidence" value="ECO:0007669"/>
    <property type="project" value="UniProtKB-ARBA"/>
</dbReference>
<dbReference type="GO" id="GO:0015935">
    <property type="term" value="C:small ribosomal subunit"/>
    <property type="evidence" value="ECO:0007669"/>
    <property type="project" value="InterPro"/>
</dbReference>
<dbReference type="GO" id="GO:0019843">
    <property type="term" value="F:rRNA binding"/>
    <property type="evidence" value="ECO:0007669"/>
    <property type="project" value="UniProtKB-UniRule"/>
</dbReference>
<dbReference type="GO" id="GO:0003735">
    <property type="term" value="F:structural constituent of ribosome"/>
    <property type="evidence" value="ECO:0007669"/>
    <property type="project" value="InterPro"/>
</dbReference>
<dbReference type="GO" id="GO:0000028">
    <property type="term" value="P:ribosomal small subunit assembly"/>
    <property type="evidence" value="ECO:0007669"/>
    <property type="project" value="TreeGrafter"/>
</dbReference>
<dbReference type="GO" id="GO:0006412">
    <property type="term" value="P:translation"/>
    <property type="evidence" value="ECO:0007669"/>
    <property type="project" value="UniProtKB-UniRule"/>
</dbReference>
<dbReference type="FunFam" id="3.30.860.10:FF:000001">
    <property type="entry name" value="30S ribosomal protein S19"/>
    <property type="match status" value="1"/>
</dbReference>
<dbReference type="Gene3D" id="3.30.860.10">
    <property type="entry name" value="30s Ribosomal Protein S19, Chain A"/>
    <property type="match status" value="1"/>
</dbReference>
<dbReference type="HAMAP" id="MF_00531">
    <property type="entry name" value="Ribosomal_uS19"/>
    <property type="match status" value="1"/>
</dbReference>
<dbReference type="InterPro" id="IPR002222">
    <property type="entry name" value="Ribosomal_uS19"/>
</dbReference>
<dbReference type="InterPro" id="IPR005732">
    <property type="entry name" value="Ribosomal_uS19_bac-type"/>
</dbReference>
<dbReference type="InterPro" id="IPR020934">
    <property type="entry name" value="Ribosomal_uS19_CS"/>
</dbReference>
<dbReference type="InterPro" id="IPR023575">
    <property type="entry name" value="Ribosomal_uS19_SF"/>
</dbReference>
<dbReference type="NCBIfam" id="TIGR01050">
    <property type="entry name" value="rpsS_bact"/>
    <property type="match status" value="1"/>
</dbReference>
<dbReference type="PANTHER" id="PTHR11880">
    <property type="entry name" value="RIBOSOMAL PROTEIN S19P FAMILY MEMBER"/>
    <property type="match status" value="1"/>
</dbReference>
<dbReference type="PANTHER" id="PTHR11880:SF8">
    <property type="entry name" value="SMALL RIBOSOMAL SUBUNIT PROTEIN US19M"/>
    <property type="match status" value="1"/>
</dbReference>
<dbReference type="Pfam" id="PF00203">
    <property type="entry name" value="Ribosomal_S19"/>
    <property type="match status" value="1"/>
</dbReference>
<dbReference type="PIRSF" id="PIRSF002144">
    <property type="entry name" value="Ribosomal_S19"/>
    <property type="match status" value="1"/>
</dbReference>
<dbReference type="PRINTS" id="PR00975">
    <property type="entry name" value="RIBOSOMALS19"/>
</dbReference>
<dbReference type="SUPFAM" id="SSF54570">
    <property type="entry name" value="Ribosomal protein S19"/>
    <property type="match status" value="1"/>
</dbReference>
<dbReference type="PROSITE" id="PS00323">
    <property type="entry name" value="RIBOSOMAL_S19"/>
    <property type="match status" value="1"/>
</dbReference>
<keyword id="KW-1185">Reference proteome</keyword>
<keyword id="KW-0687">Ribonucleoprotein</keyword>
<keyword id="KW-0689">Ribosomal protein</keyword>
<keyword id="KW-0694">RNA-binding</keyword>
<keyword id="KW-0699">rRNA-binding</keyword>
<gene>
    <name evidence="1" type="primary">rpsS</name>
    <name type="ordered locus">Mpe_A3439</name>
</gene>
<organism>
    <name type="scientific">Methylibium petroleiphilum (strain ATCC BAA-1232 / LMG 22953 / PM1)</name>
    <dbReference type="NCBI Taxonomy" id="420662"/>
    <lineage>
        <taxon>Bacteria</taxon>
        <taxon>Pseudomonadati</taxon>
        <taxon>Pseudomonadota</taxon>
        <taxon>Betaproteobacteria</taxon>
        <taxon>Burkholderiales</taxon>
        <taxon>Sphaerotilaceae</taxon>
        <taxon>Methylibium</taxon>
    </lineage>
</organism>
<evidence type="ECO:0000255" key="1">
    <source>
        <dbReference type="HAMAP-Rule" id="MF_00531"/>
    </source>
</evidence>
<evidence type="ECO:0000305" key="2"/>
<comment type="function">
    <text evidence="1">Protein S19 forms a complex with S13 that binds strongly to the 16S ribosomal RNA.</text>
</comment>
<comment type="similarity">
    <text evidence="1">Belongs to the universal ribosomal protein uS19 family.</text>
</comment>
<protein>
    <recommendedName>
        <fullName evidence="1">Small ribosomal subunit protein uS19</fullName>
    </recommendedName>
    <alternativeName>
        <fullName evidence="2">30S ribosomal protein S19</fullName>
    </alternativeName>
</protein>
<sequence length="91" mass="10194">MARSLKKGPFVDHHLVAKVEKAVAIKDKKPIKTWSRRSTILPDFIGLTIAVHNGKQHVPVYVTDQMVGHKLGEFALTRTFKGHPADKKAKK</sequence>